<name>PTH_BURA4</name>
<evidence type="ECO:0000255" key="1">
    <source>
        <dbReference type="HAMAP-Rule" id="MF_00083"/>
    </source>
</evidence>
<dbReference type="EC" id="3.1.1.29" evidence="1"/>
<dbReference type="EMBL" id="CP001025">
    <property type="protein sequence ID" value="ACB65199.1"/>
    <property type="molecule type" value="Genomic_DNA"/>
</dbReference>
<dbReference type="RefSeq" id="WP_006760396.1">
    <property type="nucleotide sequence ID" value="NC_010551.1"/>
</dbReference>
<dbReference type="SMR" id="B1YN54"/>
<dbReference type="GeneID" id="93084934"/>
<dbReference type="KEGG" id="bac:BamMC406_2722"/>
<dbReference type="HOGENOM" id="CLU_062456_3_1_4"/>
<dbReference type="OrthoDB" id="9800507at2"/>
<dbReference type="Proteomes" id="UP000001680">
    <property type="component" value="Chromosome 1"/>
</dbReference>
<dbReference type="GO" id="GO:0005737">
    <property type="term" value="C:cytoplasm"/>
    <property type="evidence" value="ECO:0007669"/>
    <property type="project" value="UniProtKB-SubCell"/>
</dbReference>
<dbReference type="GO" id="GO:0004045">
    <property type="term" value="F:peptidyl-tRNA hydrolase activity"/>
    <property type="evidence" value="ECO:0007669"/>
    <property type="project" value="UniProtKB-UniRule"/>
</dbReference>
<dbReference type="GO" id="GO:0000049">
    <property type="term" value="F:tRNA binding"/>
    <property type="evidence" value="ECO:0007669"/>
    <property type="project" value="UniProtKB-UniRule"/>
</dbReference>
<dbReference type="GO" id="GO:0006515">
    <property type="term" value="P:protein quality control for misfolded or incompletely synthesized proteins"/>
    <property type="evidence" value="ECO:0007669"/>
    <property type="project" value="UniProtKB-UniRule"/>
</dbReference>
<dbReference type="GO" id="GO:0072344">
    <property type="term" value="P:rescue of stalled ribosome"/>
    <property type="evidence" value="ECO:0007669"/>
    <property type="project" value="UniProtKB-UniRule"/>
</dbReference>
<dbReference type="CDD" id="cd00462">
    <property type="entry name" value="PTH"/>
    <property type="match status" value="1"/>
</dbReference>
<dbReference type="FunFam" id="3.40.50.1470:FF:000001">
    <property type="entry name" value="Peptidyl-tRNA hydrolase"/>
    <property type="match status" value="1"/>
</dbReference>
<dbReference type="Gene3D" id="3.40.50.1470">
    <property type="entry name" value="Peptidyl-tRNA hydrolase"/>
    <property type="match status" value="1"/>
</dbReference>
<dbReference type="HAMAP" id="MF_00083">
    <property type="entry name" value="Pept_tRNA_hydro_bact"/>
    <property type="match status" value="1"/>
</dbReference>
<dbReference type="InterPro" id="IPR001328">
    <property type="entry name" value="Pept_tRNA_hydro"/>
</dbReference>
<dbReference type="InterPro" id="IPR018171">
    <property type="entry name" value="Pept_tRNA_hydro_CS"/>
</dbReference>
<dbReference type="InterPro" id="IPR036416">
    <property type="entry name" value="Pept_tRNA_hydro_sf"/>
</dbReference>
<dbReference type="NCBIfam" id="TIGR00447">
    <property type="entry name" value="pth"/>
    <property type="match status" value="1"/>
</dbReference>
<dbReference type="PANTHER" id="PTHR17224">
    <property type="entry name" value="PEPTIDYL-TRNA HYDROLASE"/>
    <property type="match status" value="1"/>
</dbReference>
<dbReference type="PANTHER" id="PTHR17224:SF1">
    <property type="entry name" value="PEPTIDYL-TRNA HYDROLASE"/>
    <property type="match status" value="1"/>
</dbReference>
<dbReference type="Pfam" id="PF01195">
    <property type="entry name" value="Pept_tRNA_hydro"/>
    <property type="match status" value="1"/>
</dbReference>
<dbReference type="SUPFAM" id="SSF53178">
    <property type="entry name" value="Peptidyl-tRNA hydrolase-like"/>
    <property type="match status" value="1"/>
</dbReference>
<dbReference type="PROSITE" id="PS01195">
    <property type="entry name" value="PEPT_TRNA_HYDROL_1"/>
    <property type="match status" value="1"/>
</dbReference>
<dbReference type="PROSITE" id="PS01196">
    <property type="entry name" value="PEPT_TRNA_HYDROL_2"/>
    <property type="match status" value="1"/>
</dbReference>
<proteinExistence type="inferred from homology"/>
<organism>
    <name type="scientific">Burkholderia ambifaria (strain MC40-6)</name>
    <dbReference type="NCBI Taxonomy" id="398577"/>
    <lineage>
        <taxon>Bacteria</taxon>
        <taxon>Pseudomonadati</taxon>
        <taxon>Pseudomonadota</taxon>
        <taxon>Betaproteobacteria</taxon>
        <taxon>Burkholderiales</taxon>
        <taxon>Burkholderiaceae</taxon>
        <taxon>Burkholderia</taxon>
        <taxon>Burkholderia cepacia complex</taxon>
    </lineage>
</organism>
<feature type="chain" id="PRO_1000092916" description="Peptidyl-tRNA hydrolase">
    <location>
        <begin position="1"/>
        <end position="199"/>
    </location>
</feature>
<feature type="active site" description="Proton acceptor" evidence="1">
    <location>
        <position position="20"/>
    </location>
</feature>
<feature type="binding site" evidence="1">
    <location>
        <position position="15"/>
    </location>
    <ligand>
        <name>tRNA</name>
        <dbReference type="ChEBI" id="CHEBI:17843"/>
    </ligand>
</feature>
<feature type="binding site" evidence="1">
    <location>
        <position position="66"/>
    </location>
    <ligand>
        <name>tRNA</name>
        <dbReference type="ChEBI" id="CHEBI:17843"/>
    </ligand>
</feature>
<feature type="binding site" evidence="1">
    <location>
        <position position="68"/>
    </location>
    <ligand>
        <name>tRNA</name>
        <dbReference type="ChEBI" id="CHEBI:17843"/>
    </ligand>
</feature>
<feature type="binding site" evidence="1">
    <location>
        <position position="114"/>
    </location>
    <ligand>
        <name>tRNA</name>
        <dbReference type="ChEBI" id="CHEBI:17843"/>
    </ligand>
</feature>
<feature type="site" description="Discriminates between blocked and unblocked aminoacyl-tRNA" evidence="1">
    <location>
        <position position="10"/>
    </location>
</feature>
<feature type="site" description="Stabilizes the basic form of H active site to accept a proton" evidence="1">
    <location>
        <position position="93"/>
    </location>
</feature>
<accession>B1YN54</accession>
<gene>
    <name evidence="1" type="primary">pth</name>
    <name type="ordered locus">BamMC406_2722</name>
</gene>
<protein>
    <recommendedName>
        <fullName evidence="1">Peptidyl-tRNA hydrolase</fullName>
        <shortName evidence="1">Pth</shortName>
        <ecNumber evidence="1">3.1.1.29</ecNumber>
    </recommendedName>
</protein>
<keyword id="KW-0963">Cytoplasm</keyword>
<keyword id="KW-0378">Hydrolase</keyword>
<keyword id="KW-0694">RNA-binding</keyword>
<keyword id="KW-0820">tRNA-binding</keyword>
<sequence length="199" mass="21951">MIKLIVGLGNPGAEYTATRHNAGFWLVDQLAREAGATLRDERRFHGFYAKARLHGEEVHLLEPQTYMNRSGQSVVALASFFKILPDQILVAHDELDLPPGTVKLKLGGGSGGHNGLKDISAHLSSQQYWRLRIGIGHPRDLIPEGARAGAKPDVANFVLKPPRREEQDVIDASIERALAVMPMVVKGELDRATMQLHRN</sequence>
<reference key="1">
    <citation type="submission" date="2008-04" db="EMBL/GenBank/DDBJ databases">
        <title>Complete sequence of chromosome 1 of Burkholderia ambifaria MC40-6.</title>
        <authorList>
            <person name="Copeland A."/>
            <person name="Lucas S."/>
            <person name="Lapidus A."/>
            <person name="Glavina del Rio T."/>
            <person name="Dalin E."/>
            <person name="Tice H."/>
            <person name="Pitluck S."/>
            <person name="Chain P."/>
            <person name="Malfatti S."/>
            <person name="Shin M."/>
            <person name="Vergez L."/>
            <person name="Lang D."/>
            <person name="Schmutz J."/>
            <person name="Larimer F."/>
            <person name="Land M."/>
            <person name="Hauser L."/>
            <person name="Kyrpides N."/>
            <person name="Lykidis A."/>
            <person name="Ramette A."/>
            <person name="Konstantinidis K."/>
            <person name="Tiedje J."/>
            <person name="Richardson P."/>
        </authorList>
    </citation>
    <scope>NUCLEOTIDE SEQUENCE [LARGE SCALE GENOMIC DNA]</scope>
    <source>
        <strain>MC40-6</strain>
    </source>
</reference>
<comment type="function">
    <text evidence="1">Hydrolyzes ribosome-free peptidyl-tRNAs (with 1 or more amino acids incorporated), which drop off the ribosome during protein synthesis, or as a result of ribosome stalling.</text>
</comment>
<comment type="function">
    <text evidence="1">Catalyzes the release of premature peptidyl moieties from peptidyl-tRNA molecules trapped in stalled 50S ribosomal subunits, and thus maintains levels of free tRNAs and 50S ribosomes.</text>
</comment>
<comment type="catalytic activity">
    <reaction evidence="1">
        <text>an N-acyl-L-alpha-aminoacyl-tRNA + H2O = an N-acyl-L-amino acid + a tRNA + H(+)</text>
        <dbReference type="Rhea" id="RHEA:54448"/>
        <dbReference type="Rhea" id="RHEA-COMP:10123"/>
        <dbReference type="Rhea" id="RHEA-COMP:13883"/>
        <dbReference type="ChEBI" id="CHEBI:15377"/>
        <dbReference type="ChEBI" id="CHEBI:15378"/>
        <dbReference type="ChEBI" id="CHEBI:59874"/>
        <dbReference type="ChEBI" id="CHEBI:78442"/>
        <dbReference type="ChEBI" id="CHEBI:138191"/>
        <dbReference type="EC" id="3.1.1.29"/>
    </reaction>
</comment>
<comment type="subunit">
    <text evidence="1">Monomer.</text>
</comment>
<comment type="subcellular location">
    <subcellularLocation>
        <location evidence="1">Cytoplasm</location>
    </subcellularLocation>
</comment>
<comment type="similarity">
    <text evidence="1">Belongs to the PTH family.</text>
</comment>